<protein>
    <recommendedName>
        <fullName evidence="1">Flap endonuclease 1</fullName>
        <shortName evidence="1">FEN-1</shortName>
        <ecNumber evidence="1">3.1.-.-</ecNumber>
    </recommendedName>
    <alternativeName>
        <fullName>DNA repair protein rad2</fullName>
    </alternativeName>
    <alternativeName>
        <fullName evidence="1">Flap structure-specific endonuclease 1</fullName>
    </alternativeName>
</protein>
<proteinExistence type="evidence at protein level"/>
<feature type="chain" id="PRO_0000154037" description="Flap endonuclease 1">
    <location>
        <begin position="1"/>
        <end position="380"/>
    </location>
</feature>
<feature type="region of interest" description="N-domain">
    <location>
        <begin position="1"/>
        <end position="105"/>
    </location>
</feature>
<feature type="region of interest" description="I-domain">
    <location>
        <begin position="123"/>
        <end position="254"/>
    </location>
</feature>
<feature type="region of interest" description="Interaction with PCNA" evidence="1">
    <location>
        <begin position="337"/>
        <end position="345"/>
    </location>
</feature>
<feature type="region of interest" description="Disordered" evidence="2">
    <location>
        <begin position="340"/>
        <end position="380"/>
    </location>
</feature>
<feature type="compositionally biased region" description="Low complexity" evidence="2">
    <location>
        <begin position="342"/>
        <end position="353"/>
    </location>
</feature>
<feature type="compositionally biased region" description="Basic and acidic residues" evidence="2">
    <location>
        <begin position="370"/>
        <end position="380"/>
    </location>
</feature>
<feature type="binding site" evidence="1">
    <location>
        <position position="34"/>
    </location>
    <ligand>
        <name>Mg(2+)</name>
        <dbReference type="ChEBI" id="CHEBI:18420"/>
        <label>1</label>
    </ligand>
</feature>
<feature type="binding site" evidence="1">
    <location>
        <position position="47"/>
    </location>
    <ligand>
        <name>DNA</name>
        <dbReference type="ChEBI" id="CHEBI:16991"/>
    </ligand>
</feature>
<feature type="binding site" evidence="1">
    <location>
        <position position="71"/>
    </location>
    <ligand>
        <name>DNA</name>
        <dbReference type="ChEBI" id="CHEBI:16991"/>
    </ligand>
</feature>
<feature type="binding site" evidence="1">
    <location>
        <position position="87"/>
    </location>
    <ligand>
        <name>Mg(2+)</name>
        <dbReference type="ChEBI" id="CHEBI:18420"/>
        <label>1</label>
    </ligand>
</feature>
<feature type="binding site" evidence="1">
    <location>
        <position position="159"/>
    </location>
    <ligand>
        <name>DNA</name>
        <dbReference type="ChEBI" id="CHEBI:16991"/>
    </ligand>
</feature>
<feature type="binding site" evidence="1">
    <location>
        <position position="159"/>
    </location>
    <ligand>
        <name>Mg(2+)</name>
        <dbReference type="ChEBI" id="CHEBI:18420"/>
        <label>1</label>
    </ligand>
</feature>
<feature type="binding site" evidence="1">
    <location>
        <position position="161"/>
    </location>
    <ligand>
        <name>Mg(2+)</name>
        <dbReference type="ChEBI" id="CHEBI:18420"/>
        <label>1</label>
    </ligand>
</feature>
<feature type="binding site" evidence="1">
    <location>
        <position position="180"/>
    </location>
    <ligand>
        <name>Mg(2+)</name>
        <dbReference type="ChEBI" id="CHEBI:18420"/>
        <label>2</label>
    </ligand>
</feature>
<feature type="binding site" evidence="1">
    <location>
        <position position="182"/>
    </location>
    <ligand>
        <name>Mg(2+)</name>
        <dbReference type="ChEBI" id="CHEBI:18420"/>
        <label>2</label>
    </ligand>
</feature>
<feature type="binding site" evidence="1">
    <location>
        <position position="232"/>
    </location>
    <ligand>
        <name>DNA</name>
        <dbReference type="ChEBI" id="CHEBI:16991"/>
    </ligand>
</feature>
<feature type="binding site" evidence="1">
    <location>
        <position position="234"/>
    </location>
    <ligand>
        <name>DNA</name>
        <dbReference type="ChEBI" id="CHEBI:16991"/>
    </ligand>
</feature>
<feature type="binding site" evidence="1">
    <location>
        <position position="234"/>
    </location>
    <ligand>
        <name>Mg(2+)</name>
        <dbReference type="ChEBI" id="CHEBI:18420"/>
        <label>2</label>
    </ligand>
</feature>
<feature type="modified residue" description="Phosphoserine" evidence="3">
    <location>
        <position position="350"/>
    </location>
</feature>
<feature type="modified residue" description="Phosphoserine" evidence="3">
    <location>
        <position position="351"/>
    </location>
</feature>
<reference key="1">
    <citation type="journal article" date="1994" name="Mol. Cell. Biol.">
        <title>Structural and functional conservation of the human homolog of the Schizosaccharomyces pombe rad2 gene, which is required for chromosome segregation and recovery from DNA damage.</title>
        <authorList>
            <person name="Murray J.M."/>
            <person name="Tavassoli M."/>
            <person name="Al-Harithy R."/>
            <person name="Sheldrick K.S."/>
            <person name="Lehmann A.R."/>
            <person name="Carr A.M."/>
            <person name="Watts F.Z."/>
        </authorList>
    </citation>
    <scope>NUCLEOTIDE SEQUENCE [GENOMIC DNA]</scope>
</reference>
<reference key="2">
    <citation type="journal article" date="2002" name="Nature">
        <title>The genome sequence of Schizosaccharomyces pombe.</title>
        <authorList>
            <person name="Wood V."/>
            <person name="Gwilliam R."/>
            <person name="Rajandream M.A."/>
            <person name="Lyne M.H."/>
            <person name="Lyne R."/>
            <person name="Stewart A."/>
            <person name="Sgouros J.G."/>
            <person name="Peat N."/>
            <person name="Hayles J."/>
            <person name="Baker S.G."/>
            <person name="Basham D."/>
            <person name="Bowman S."/>
            <person name="Brooks K."/>
            <person name="Brown D."/>
            <person name="Brown S."/>
            <person name="Chillingworth T."/>
            <person name="Churcher C.M."/>
            <person name="Collins M."/>
            <person name="Connor R."/>
            <person name="Cronin A."/>
            <person name="Davis P."/>
            <person name="Feltwell T."/>
            <person name="Fraser A."/>
            <person name="Gentles S."/>
            <person name="Goble A."/>
            <person name="Hamlin N."/>
            <person name="Harris D.E."/>
            <person name="Hidalgo J."/>
            <person name="Hodgson G."/>
            <person name="Holroyd S."/>
            <person name="Hornsby T."/>
            <person name="Howarth S."/>
            <person name="Huckle E.J."/>
            <person name="Hunt S."/>
            <person name="Jagels K."/>
            <person name="James K.D."/>
            <person name="Jones L."/>
            <person name="Jones M."/>
            <person name="Leather S."/>
            <person name="McDonald S."/>
            <person name="McLean J."/>
            <person name="Mooney P."/>
            <person name="Moule S."/>
            <person name="Mungall K.L."/>
            <person name="Murphy L.D."/>
            <person name="Niblett D."/>
            <person name="Odell C."/>
            <person name="Oliver K."/>
            <person name="O'Neil S."/>
            <person name="Pearson D."/>
            <person name="Quail M.A."/>
            <person name="Rabbinowitsch E."/>
            <person name="Rutherford K.M."/>
            <person name="Rutter S."/>
            <person name="Saunders D."/>
            <person name="Seeger K."/>
            <person name="Sharp S."/>
            <person name="Skelton J."/>
            <person name="Simmonds M.N."/>
            <person name="Squares R."/>
            <person name="Squares S."/>
            <person name="Stevens K."/>
            <person name="Taylor K."/>
            <person name="Taylor R.G."/>
            <person name="Tivey A."/>
            <person name="Walsh S.V."/>
            <person name="Warren T."/>
            <person name="Whitehead S."/>
            <person name="Woodward J.R."/>
            <person name="Volckaert G."/>
            <person name="Aert R."/>
            <person name="Robben J."/>
            <person name="Grymonprez B."/>
            <person name="Weltjens I."/>
            <person name="Vanstreels E."/>
            <person name="Rieger M."/>
            <person name="Schaefer M."/>
            <person name="Mueller-Auer S."/>
            <person name="Gabel C."/>
            <person name="Fuchs M."/>
            <person name="Duesterhoeft A."/>
            <person name="Fritzc C."/>
            <person name="Holzer E."/>
            <person name="Moestl D."/>
            <person name="Hilbert H."/>
            <person name="Borzym K."/>
            <person name="Langer I."/>
            <person name="Beck A."/>
            <person name="Lehrach H."/>
            <person name="Reinhardt R."/>
            <person name="Pohl T.M."/>
            <person name="Eger P."/>
            <person name="Zimmermann W."/>
            <person name="Wedler H."/>
            <person name="Wambutt R."/>
            <person name="Purnelle B."/>
            <person name="Goffeau A."/>
            <person name="Cadieu E."/>
            <person name="Dreano S."/>
            <person name="Gloux S."/>
            <person name="Lelaure V."/>
            <person name="Mottier S."/>
            <person name="Galibert F."/>
            <person name="Aves S.J."/>
            <person name="Xiang Z."/>
            <person name="Hunt C."/>
            <person name="Moore K."/>
            <person name="Hurst S.M."/>
            <person name="Lucas M."/>
            <person name="Rochet M."/>
            <person name="Gaillardin C."/>
            <person name="Tallada V.A."/>
            <person name="Garzon A."/>
            <person name="Thode G."/>
            <person name="Daga R.R."/>
            <person name="Cruzado L."/>
            <person name="Jimenez J."/>
            <person name="Sanchez M."/>
            <person name="del Rey F."/>
            <person name="Benito J."/>
            <person name="Dominguez A."/>
            <person name="Revuelta J.L."/>
            <person name="Moreno S."/>
            <person name="Armstrong J."/>
            <person name="Forsburg S.L."/>
            <person name="Cerutti L."/>
            <person name="Lowe T."/>
            <person name="McCombie W.R."/>
            <person name="Paulsen I."/>
            <person name="Potashkin J."/>
            <person name="Shpakovski G.V."/>
            <person name="Ussery D."/>
            <person name="Barrell B.G."/>
            <person name="Nurse P."/>
        </authorList>
    </citation>
    <scope>NUCLEOTIDE SEQUENCE [LARGE SCALE GENOMIC DNA]</scope>
    <source>
        <strain>972 / ATCC 24843</strain>
    </source>
</reference>
<reference key="3">
    <citation type="journal article" date="2008" name="J. Proteome Res.">
        <title>Phosphoproteome analysis of fission yeast.</title>
        <authorList>
            <person name="Wilson-Grady J.T."/>
            <person name="Villen J."/>
            <person name="Gygi S.P."/>
        </authorList>
    </citation>
    <scope>PHOSPHORYLATION [LARGE SCALE ANALYSIS] AT SER-350 AND SER-351</scope>
    <scope>IDENTIFICATION BY MASS SPECTROMETRY</scope>
</reference>
<organism>
    <name type="scientific">Schizosaccharomyces pombe (strain 972 / ATCC 24843)</name>
    <name type="common">Fission yeast</name>
    <dbReference type="NCBI Taxonomy" id="284812"/>
    <lineage>
        <taxon>Eukaryota</taxon>
        <taxon>Fungi</taxon>
        <taxon>Dikarya</taxon>
        <taxon>Ascomycota</taxon>
        <taxon>Taphrinomycotina</taxon>
        <taxon>Schizosaccharomycetes</taxon>
        <taxon>Schizosaccharomycetales</taxon>
        <taxon>Schizosaccharomycetaceae</taxon>
        <taxon>Schizosaccharomyces</taxon>
    </lineage>
</organism>
<gene>
    <name evidence="1" type="primary">rad2</name>
    <name evidence="1" type="synonym">fen1</name>
    <name type="ORF">SPAC3G6.06c</name>
</gene>
<keyword id="KW-0227">DNA damage</keyword>
<keyword id="KW-0234">DNA repair</keyword>
<keyword id="KW-0235">DNA replication</keyword>
<keyword id="KW-0255">Endonuclease</keyword>
<keyword id="KW-0269">Exonuclease</keyword>
<keyword id="KW-0378">Hydrolase</keyword>
<keyword id="KW-0460">Magnesium</keyword>
<keyword id="KW-0479">Metal-binding</keyword>
<keyword id="KW-0496">Mitochondrion</keyword>
<keyword id="KW-0540">Nuclease</keyword>
<keyword id="KW-0539">Nucleus</keyword>
<keyword id="KW-0597">Phosphoprotein</keyword>
<keyword id="KW-1185">Reference proteome</keyword>
<accession>P39750</accession>
<sequence length="380" mass="42866">MGIKGLAQVLSEHAPASVKHNDIKNYFGRKVAIDASMSLYQFLIQVRSQDGQQLMNEQGETTSHLMGMFYRTLRIVDNGIKPCFVFDGKPPTLKSGELAKRVARHQKAREDQEETKEVGTAEMVDRFAKRTVKVTRQHNDEAKRLLELMGIPFVNAPCEAEAQCAALARSGKVYAAASEDMDTLCFQAPVLLRHLTFSEQRKEPISEYNIEKALNGLDMSVEQFVDLCILLGCDYCEPIRGVGPARAVELIRQYGTLDRFVKEADRSKYPIPEDWPYEDARRLFLDAEVLPGEEIELKWKSPDADGIIQFLVKEKGFNEDRVKLGINRLEKASKTIPQGRLDSFFKPVPSSPKKPVDTKSKGSAKRKRDSNKGGESKKKR</sequence>
<name>FEN1_SCHPO</name>
<evidence type="ECO:0000255" key="1">
    <source>
        <dbReference type="HAMAP-Rule" id="MF_03140"/>
    </source>
</evidence>
<evidence type="ECO:0000256" key="2">
    <source>
        <dbReference type="SAM" id="MobiDB-lite"/>
    </source>
</evidence>
<evidence type="ECO:0000269" key="3">
    <source>
    </source>
</evidence>
<comment type="function">
    <text evidence="1">Structure-specific nuclease with 5'-flap endonuclease and 5'-3' exonuclease activities involved in DNA replication and repair. During DNA replication, cleaves the 5'-overhanging flap structure that is generated by displacement synthesis when DNA polymerase encounters the 5'-end of a downstream Okazaki fragment. It enters the flap from the 5'-end and then tracks to cleave the flap base, leaving a nick for ligation. Also involved in the long patch base excision repair (LP-BER) pathway, by cleaving within the apurinic/apyrimidinic (AP) site-terminated flap. Acts as a genome stabilization factor that prevents flaps from equilibrating into structures that lead to duplications and deletions. Also possesses 5'-3' exonuclease activity on nicked or gapped double-stranded DNA, and exhibits RNase H activity. Also involved in replication and repair of rDNA and in repairing mitochondrial DNA.</text>
</comment>
<comment type="cofactor">
    <cofactor evidence="1">
        <name>Mg(2+)</name>
        <dbReference type="ChEBI" id="CHEBI:18420"/>
    </cofactor>
    <text evidence="1">Binds 2 magnesium ions per subunit. They probably participate in the reaction catalyzed by the enzyme. May bind an additional third magnesium ion after substrate binding.</text>
</comment>
<comment type="subunit">
    <text evidence="1">Interacts with PCNA. Three molecules of rad2 bind to one PCNA trimer with each molecule binding to one PCNA monomer. PCNA stimulates the nuclease activity without altering cleavage specificity.</text>
</comment>
<comment type="subcellular location">
    <subcellularLocation>
        <location evidence="1">Nucleus</location>
        <location evidence="1">Nucleolus</location>
    </subcellularLocation>
    <subcellularLocation>
        <location evidence="1">Nucleus</location>
        <location evidence="1">Nucleoplasm</location>
    </subcellularLocation>
    <subcellularLocation>
        <location evidence="1">Mitochondrion</location>
    </subcellularLocation>
    <text evidence="1">Resides mostly in the nucleoli and relocalizes to the nucleoplasm upon DNA damage.</text>
</comment>
<comment type="PTM">
    <text evidence="1">Phosphorylated. Phosphorylation upon DNA damage induces relocalization to the nuclear plasma.</text>
</comment>
<comment type="similarity">
    <text evidence="1">Belongs to the XPG/RAD2 endonuclease family. FEN1 subfamily.</text>
</comment>
<dbReference type="EC" id="3.1.-.-" evidence="1"/>
<dbReference type="EMBL" id="X77041">
    <property type="protein sequence ID" value="CAB36991.1"/>
    <property type="molecule type" value="Genomic_DNA"/>
</dbReference>
<dbReference type="EMBL" id="CU329670">
    <property type="protein sequence ID" value="CAB16282.1"/>
    <property type="molecule type" value="Genomic_DNA"/>
</dbReference>
<dbReference type="PIR" id="A56054">
    <property type="entry name" value="A56054"/>
</dbReference>
<dbReference type="RefSeq" id="NP_594972.1">
    <property type="nucleotide sequence ID" value="NM_001020403.2"/>
</dbReference>
<dbReference type="SMR" id="P39750"/>
<dbReference type="BioGRID" id="279595">
    <property type="interactions" value="106"/>
</dbReference>
<dbReference type="FunCoup" id="P39750">
    <property type="interactions" value="904"/>
</dbReference>
<dbReference type="STRING" id="284812.P39750"/>
<dbReference type="iPTMnet" id="P39750"/>
<dbReference type="PaxDb" id="4896-SPAC3G6.06c.1"/>
<dbReference type="EnsemblFungi" id="SPAC3G6.06c.1">
    <property type="protein sequence ID" value="SPAC3G6.06c.1:pep"/>
    <property type="gene ID" value="SPAC3G6.06c"/>
</dbReference>
<dbReference type="GeneID" id="2543164"/>
<dbReference type="KEGG" id="spo:2543164"/>
<dbReference type="PomBase" id="SPAC3G6.06c">
    <property type="gene designation" value="rad2"/>
</dbReference>
<dbReference type="VEuPathDB" id="FungiDB:SPAC3G6.06c"/>
<dbReference type="eggNOG" id="KOG2519">
    <property type="taxonomic scope" value="Eukaryota"/>
</dbReference>
<dbReference type="HOGENOM" id="CLU_032444_2_0_1"/>
<dbReference type="InParanoid" id="P39750"/>
<dbReference type="OMA" id="IQEVHID"/>
<dbReference type="PhylomeDB" id="P39750"/>
<dbReference type="Reactome" id="R-SPO-5651801">
    <property type="pathway name" value="PCNA-Dependent Long Patch Base Excision Repair"/>
</dbReference>
<dbReference type="Reactome" id="R-SPO-5685939">
    <property type="pathway name" value="HDR through MMEJ (alt-NHEJ)"/>
</dbReference>
<dbReference type="Reactome" id="R-SPO-69166">
    <property type="pathway name" value="Removal of the Flap Intermediate"/>
</dbReference>
<dbReference type="PRO" id="PR:P39750"/>
<dbReference type="Proteomes" id="UP000002485">
    <property type="component" value="Chromosome I"/>
</dbReference>
<dbReference type="GO" id="GO:0005737">
    <property type="term" value="C:cytoplasm"/>
    <property type="evidence" value="ECO:0000318"/>
    <property type="project" value="GO_Central"/>
</dbReference>
<dbReference type="GO" id="GO:0005739">
    <property type="term" value="C:mitochondrion"/>
    <property type="evidence" value="ECO:0007669"/>
    <property type="project" value="UniProtKB-SubCell"/>
</dbReference>
<dbReference type="GO" id="GO:0005730">
    <property type="term" value="C:nucleolus"/>
    <property type="evidence" value="ECO:0007669"/>
    <property type="project" value="UniProtKB-SubCell"/>
</dbReference>
<dbReference type="GO" id="GO:0005654">
    <property type="term" value="C:nucleoplasm"/>
    <property type="evidence" value="ECO:0007669"/>
    <property type="project" value="UniProtKB-SubCell"/>
</dbReference>
<dbReference type="GO" id="GO:0005634">
    <property type="term" value="C:nucleus"/>
    <property type="evidence" value="ECO:0007005"/>
    <property type="project" value="PomBase"/>
</dbReference>
<dbReference type="GO" id="GO:0035861">
    <property type="term" value="C:site of double-strand break"/>
    <property type="evidence" value="ECO:0000314"/>
    <property type="project" value="PomBase"/>
</dbReference>
<dbReference type="GO" id="GO:0035312">
    <property type="term" value="F:5'-3' DNA exonuclease activity"/>
    <property type="evidence" value="ECO:0000314"/>
    <property type="project" value="PomBase"/>
</dbReference>
<dbReference type="GO" id="GO:0008409">
    <property type="term" value="F:5'-3' exonuclease activity"/>
    <property type="evidence" value="ECO:0000318"/>
    <property type="project" value="GO_Central"/>
</dbReference>
<dbReference type="GO" id="GO:0017108">
    <property type="term" value="F:5'-flap endonuclease activity"/>
    <property type="evidence" value="ECO:0000314"/>
    <property type="project" value="PomBase"/>
</dbReference>
<dbReference type="GO" id="GO:0003677">
    <property type="term" value="F:DNA binding"/>
    <property type="evidence" value="ECO:0007669"/>
    <property type="project" value="UniProtKB-UniRule"/>
</dbReference>
<dbReference type="GO" id="GO:0051908">
    <property type="term" value="F:double-stranded DNA 5'-3' DNA exonuclease activity"/>
    <property type="evidence" value="ECO:0000314"/>
    <property type="project" value="PomBase"/>
</dbReference>
<dbReference type="GO" id="GO:0000287">
    <property type="term" value="F:magnesium ion binding"/>
    <property type="evidence" value="ECO:0007669"/>
    <property type="project" value="UniProtKB-UniRule"/>
</dbReference>
<dbReference type="GO" id="GO:0045145">
    <property type="term" value="F:single-stranded DNA 5'-3' DNA exonuclease activity"/>
    <property type="evidence" value="ECO:0000314"/>
    <property type="project" value="PomBase"/>
</dbReference>
<dbReference type="GO" id="GO:0006284">
    <property type="term" value="P:base-excision repair"/>
    <property type="evidence" value="ECO:0000314"/>
    <property type="project" value="PomBase"/>
</dbReference>
<dbReference type="GO" id="GO:0043137">
    <property type="term" value="P:DNA replication, removal of RNA primer"/>
    <property type="evidence" value="ECO:0007669"/>
    <property type="project" value="UniProtKB-UniRule"/>
</dbReference>
<dbReference type="GO" id="GO:0032042">
    <property type="term" value="P:mitochondrial DNA metabolic process"/>
    <property type="evidence" value="ECO:0000316"/>
    <property type="project" value="PomBase"/>
</dbReference>
<dbReference type="GO" id="GO:0070914">
    <property type="term" value="P:UV-damage excision repair"/>
    <property type="evidence" value="ECO:0000314"/>
    <property type="project" value="PomBase"/>
</dbReference>
<dbReference type="CDD" id="cd09907">
    <property type="entry name" value="H3TH_FEN1-Euk"/>
    <property type="match status" value="1"/>
</dbReference>
<dbReference type="CDD" id="cd09867">
    <property type="entry name" value="PIN_FEN1"/>
    <property type="match status" value="1"/>
</dbReference>
<dbReference type="FunFam" id="1.10.150.20:FF:000009">
    <property type="entry name" value="Flap endonuclease 1"/>
    <property type="match status" value="1"/>
</dbReference>
<dbReference type="FunFam" id="3.40.50.1010:FF:000003">
    <property type="entry name" value="Flap endonuclease 1"/>
    <property type="match status" value="1"/>
</dbReference>
<dbReference type="Gene3D" id="1.10.150.20">
    <property type="entry name" value="5' to 3' exonuclease, C-terminal subdomain"/>
    <property type="match status" value="1"/>
</dbReference>
<dbReference type="Gene3D" id="3.40.50.1010">
    <property type="entry name" value="5'-nuclease"/>
    <property type="match status" value="1"/>
</dbReference>
<dbReference type="HAMAP" id="MF_00614">
    <property type="entry name" value="Fen"/>
    <property type="match status" value="1"/>
</dbReference>
<dbReference type="InterPro" id="IPR036279">
    <property type="entry name" value="5-3_exonuclease_C_sf"/>
</dbReference>
<dbReference type="InterPro" id="IPR023426">
    <property type="entry name" value="Flap_endonuc"/>
</dbReference>
<dbReference type="InterPro" id="IPR008918">
    <property type="entry name" value="HhH2"/>
</dbReference>
<dbReference type="InterPro" id="IPR029060">
    <property type="entry name" value="PIN-like_dom_sf"/>
</dbReference>
<dbReference type="InterPro" id="IPR006086">
    <property type="entry name" value="XPG-I_dom"/>
</dbReference>
<dbReference type="InterPro" id="IPR006084">
    <property type="entry name" value="XPG/Rad2"/>
</dbReference>
<dbReference type="InterPro" id="IPR019974">
    <property type="entry name" value="XPG_CS"/>
</dbReference>
<dbReference type="InterPro" id="IPR006085">
    <property type="entry name" value="XPG_DNA_repair_N"/>
</dbReference>
<dbReference type="PANTHER" id="PTHR11081:SF9">
    <property type="entry name" value="FLAP ENDONUCLEASE 1"/>
    <property type="match status" value="1"/>
</dbReference>
<dbReference type="PANTHER" id="PTHR11081">
    <property type="entry name" value="FLAP ENDONUCLEASE FAMILY MEMBER"/>
    <property type="match status" value="1"/>
</dbReference>
<dbReference type="Pfam" id="PF00867">
    <property type="entry name" value="XPG_I"/>
    <property type="match status" value="1"/>
</dbReference>
<dbReference type="Pfam" id="PF00752">
    <property type="entry name" value="XPG_N"/>
    <property type="match status" value="1"/>
</dbReference>
<dbReference type="PRINTS" id="PR00853">
    <property type="entry name" value="XPGRADSUPER"/>
</dbReference>
<dbReference type="SMART" id="SM00279">
    <property type="entry name" value="HhH2"/>
    <property type="match status" value="1"/>
</dbReference>
<dbReference type="SMART" id="SM00484">
    <property type="entry name" value="XPGI"/>
    <property type="match status" value="1"/>
</dbReference>
<dbReference type="SMART" id="SM00485">
    <property type="entry name" value="XPGN"/>
    <property type="match status" value="1"/>
</dbReference>
<dbReference type="SUPFAM" id="SSF47807">
    <property type="entry name" value="5' to 3' exonuclease, C-terminal subdomain"/>
    <property type="match status" value="1"/>
</dbReference>
<dbReference type="SUPFAM" id="SSF88723">
    <property type="entry name" value="PIN domain-like"/>
    <property type="match status" value="1"/>
</dbReference>
<dbReference type="PROSITE" id="PS00841">
    <property type="entry name" value="XPG_1"/>
    <property type="match status" value="1"/>
</dbReference>
<dbReference type="PROSITE" id="PS00842">
    <property type="entry name" value="XPG_2"/>
    <property type="match status" value="1"/>
</dbReference>